<protein>
    <recommendedName>
        <fullName evidence="1">Phosphatidylserine decarboxylase proenzyme</fullName>
        <ecNumber evidence="1">4.1.1.65</ecNumber>
    </recommendedName>
    <component>
        <recommendedName>
            <fullName evidence="1">Phosphatidylserine decarboxylase alpha chain</fullName>
        </recommendedName>
    </component>
    <component>
        <recommendedName>
            <fullName evidence="1">Phosphatidylserine decarboxylase beta chain</fullName>
        </recommendedName>
    </component>
</protein>
<dbReference type="EC" id="4.1.1.65" evidence="1"/>
<dbReference type="EMBL" id="AE000516">
    <property type="protein sequence ID" value="AAK44676.1"/>
    <property type="molecule type" value="Genomic_DNA"/>
</dbReference>
<dbReference type="PIR" id="C70632">
    <property type="entry name" value="C70632"/>
</dbReference>
<dbReference type="RefSeq" id="WP_003402216.1">
    <property type="nucleotide sequence ID" value="NZ_KK341227.1"/>
</dbReference>
<dbReference type="SMR" id="P9WHQ4"/>
<dbReference type="KEGG" id="mtc:MT0453"/>
<dbReference type="PATRIC" id="fig|83331.31.peg.480"/>
<dbReference type="HOGENOM" id="CLU_072492_0_0_11"/>
<dbReference type="UniPathway" id="UPA00558">
    <property type="reaction ID" value="UER00616"/>
</dbReference>
<dbReference type="Proteomes" id="UP000001020">
    <property type="component" value="Chromosome"/>
</dbReference>
<dbReference type="GO" id="GO:0005886">
    <property type="term" value="C:plasma membrane"/>
    <property type="evidence" value="ECO:0007669"/>
    <property type="project" value="UniProtKB-SubCell"/>
</dbReference>
<dbReference type="GO" id="GO:0004609">
    <property type="term" value="F:phosphatidylserine decarboxylase activity"/>
    <property type="evidence" value="ECO:0007669"/>
    <property type="project" value="UniProtKB-UniRule"/>
</dbReference>
<dbReference type="GO" id="GO:0006646">
    <property type="term" value="P:phosphatidylethanolamine biosynthetic process"/>
    <property type="evidence" value="ECO:0007669"/>
    <property type="project" value="UniProtKB-UniRule"/>
</dbReference>
<dbReference type="HAMAP" id="MF_00664">
    <property type="entry name" value="PS_decarb_PSD_A"/>
    <property type="match status" value="1"/>
</dbReference>
<dbReference type="InterPro" id="IPR003817">
    <property type="entry name" value="PS_Dcarbxylase"/>
</dbReference>
<dbReference type="InterPro" id="IPR033175">
    <property type="entry name" value="PSD-A"/>
</dbReference>
<dbReference type="NCBIfam" id="NF003679">
    <property type="entry name" value="PRK05305.1-3"/>
    <property type="match status" value="1"/>
</dbReference>
<dbReference type="PANTHER" id="PTHR35809">
    <property type="entry name" value="ARCHAETIDYLSERINE DECARBOXYLASE PROENZYME-RELATED"/>
    <property type="match status" value="1"/>
</dbReference>
<dbReference type="PANTHER" id="PTHR35809:SF1">
    <property type="entry name" value="ARCHAETIDYLSERINE DECARBOXYLASE PROENZYME-RELATED"/>
    <property type="match status" value="1"/>
</dbReference>
<dbReference type="Pfam" id="PF02666">
    <property type="entry name" value="PS_Dcarbxylase"/>
    <property type="match status" value="1"/>
</dbReference>
<name>PSD_MYCTO</name>
<proteinExistence type="inferred from homology"/>
<keyword id="KW-1003">Cell membrane</keyword>
<keyword id="KW-0210">Decarboxylase</keyword>
<keyword id="KW-0444">Lipid biosynthesis</keyword>
<keyword id="KW-0443">Lipid metabolism</keyword>
<keyword id="KW-0456">Lyase</keyword>
<keyword id="KW-0472">Membrane</keyword>
<keyword id="KW-0594">Phospholipid biosynthesis</keyword>
<keyword id="KW-1208">Phospholipid metabolism</keyword>
<keyword id="KW-0670">Pyruvate</keyword>
<keyword id="KW-1185">Reference proteome</keyword>
<keyword id="KW-0865">Zymogen</keyword>
<sequence length="231" mass="24260">MARRPRPDGPQHLLALVRSAVPPVHPAGRPFIAAGLAIAAVGHRYRWLRGTGLLAAAACAGFFRHPQRVPPTRPAAIVAPADGVICAIDSAAPPAELSMGDTPLPRVSIFLSILDAHVQRAPVSGEVIAVQHRPGRFGSADLPEASDDNERTSVRIRMPNGAEVVAVQIAGLVARRIVCDAHVGDKLAIGDTYGLIRFGSRLDTYLPAGAEPIVNVGQRAVAGETVLAECR</sequence>
<gene>
    <name evidence="1" type="primary">psd</name>
    <name type="ordered locus">MT0453</name>
</gene>
<reference key="1">
    <citation type="journal article" date="2002" name="J. Bacteriol.">
        <title>Whole-genome comparison of Mycobacterium tuberculosis clinical and laboratory strains.</title>
        <authorList>
            <person name="Fleischmann R.D."/>
            <person name="Alland D."/>
            <person name="Eisen J.A."/>
            <person name="Carpenter L."/>
            <person name="White O."/>
            <person name="Peterson J.D."/>
            <person name="DeBoy R.T."/>
            <person name="Dodson R.J."/>
            <person name="Gwinn M.L."/>
            <person name="Haft D.H."/>
            <person name="Hickey E.K."/>
            <person name="Kolonay J.F."/>
            <person name="Nelson W.C."/>
            <person name="Umayam L.A."/>
            <person name="Ermolaeva M.D."/>
            <person name="Salzberg S.L."/>
            <person name="Delcher A."/>
            <person name="Utterback T.R."/>
            <person name="Weidman J.F."/>
            <person name="Khouri H.M."/>
            <person name="Gill J."/>
            <person name="Mikula A."/>
            <person name="Bishai W."/>
            <person name="Jacobs W.R. Jr."/>
            <person name="Venter J.C."/>
            <person name="Fraser C.M."/>
        </authorList>
    </citation>
    <scope>NUCLEOTIDE SEQUENCE [LARGE SCALE GENOMIC DNA]</scope>
    <source>
        <strain>CDC 1551 / Oshkosh</strain>
    </source>
</reference>
<accession>P9WHQ4</accession>
<accession>L0T6G6</accession>
<accession>O86324</accession>
<accession>P67547</accession>
<organism>
    <name type="scientific">Mycobacterium tuberculosis (strain CDC 1551 / Oshkosh)</name>
    <dbReference type="NCBI Taxonomy" id="83331"/>
    <lineage>
        <taxon>Bacteria</taxon>
        <taxon>Bacillati</taxon>
        <taxon>Actinomycetota</taxon>
        <taxon>Actinomycetes</taxon>
        <taxon>Mycobacteriales</taxon>
        <taxon>Mycobacteriaceae</taxon>
        <taxon>Mycobacterium</taxon>
        <taxon>Mycobacterium tuberculosis complex</taxon>
    </lineage>
</organism>
<comment type="function">
    <text evidence="1">Catalyzes the formation of phosphatidylethanolamine (PtdEtn) from phosphatidylserine (PtdSer).</text>
</comment>
<comment type="catalytic activity">
    <reaction evidence="1">
        <text>a 1,2-diacyl-sn-glycero-3-phospho-L-serine + H(+) = a 1,2-diacyl-sn-glycero-3-phosphoethanolamine + CO2</text>
        <dbReference type="Rhea" id="RHEA:20828"/>
        <dbReference type="ChEBI" id="CHEBI:15378"/>
        <dbReference type="ChEBI" id="CHEBI:16526"/>
        <dbReference type="ChEBI" id="CHEBI:57262"/>
        <dbReference type="ChEBI" id="CHEBI:64612"/>
        <dbReference type="EC" id="4.1.1.65"/>
    </reaction>
</comment>
<comment type="cofactor">
    <cofactor evidence="1">
        <name>pyruvate</name>
        <dbReference type="ChEBI" id="CHEBI:15361"/>
    </cofactor>
    <text evidence="1">Binds 1 pyruvoyl group covalently per subunit.</text>
</comment>
<comment type="pathway">
    <text evidence="1">Phospholipid metabolism; phosphatidylethanolamine biosynthesis; phosphatidylethanolamine from CDP-diacylglycerol: step 2/2.</text>
</comment>
<comment type="subunit">
    <text evidence="1">Heterodimer of a large membrane-associated beta subunit and a small pyruvoyl-containing alpha subunit.</text>
</comment>
<comment type="subcellular location">
    <subcellularLocation>
        <location evidence="1">Cell membrane</location>
        <topology evidence="1">Peripheral membrane protein</topology>
    </subcellularLocation>
</comment>
<comment type="PTM">
    <text evidence="1">Is synthesized initially as an inactive proenzyme. Formation of the active enzyme involves a self-maturation process in which the active site pyruvoyl group is generated from an internal serine residue via an autocatalytic post-translational modification. Two non-identical subunits are generated from the proenzyme in this reaction, and the pyruvate is formed at the N-terminus of the alpha chain, which is derived from the carboxyl end of the proenzyme. The post-translation cleavage follows an unusual pathway, termed non-hydrolytic serinolysis, in which the side chain hydroxyl group of the serine supplies its oxygen atom to form the C-terminus of the beta chain, while the remainder of the serine residue undergoes an oxidative deamination to produce ammonia and the pyruvoyl prosthetic group on the alpha chain.</text>
</comment>
<comment type="similarity">
    <text evidence="1">Belongs to the phosphatidylserine decarboxylase family. PSD-A subfamily.</text>
</comment>
<evidence type="ECO:0000255" key="1">
    <source>
        <dbReference type="HAMAP-Rule" id="MF_00664"/>
    </source>
</evidence>
<feature type="chain" id="PRO_0000428143" description="Phosphatidylserine decarboxylase beta chain" evidence="1">
    <location>
        <begin position="1"/>
        <end position="199"/>
    </location>
</feature>
<feature type="chain" id="PRO_0000428144" description="Phosphatidylserine decarboxylase alpha chain" evidence="1">
    <location>
        <begin position="200"/>
        <end position="231"/>
    </location>
</feature>
<feature type="active site" description="Schiff-base intermediate with substrate; via pyruvic acid" evidence="1">
    <location>
        <position position="200"/>
    </location>
</feature>
<feature type="site" description="Cleavage (non-hydrolytic); by autocatalysis" evidence="1">
    <location>
        <begin position="199"/>
        <end position="200"/>
    </location>
</feature>
<feature type="modified residue" description="Pyruvic acid (Ser); by autocatalysis" evidence="1">
    <location>
        <position position="200"/>
    </location>
</feature>